<dbReference type="GO" id="GO:0005576">
    <property type="term" value="C:extracellular region"/>
    <property type="evidence" value="ECO:0007669"/>
    <property type="project" value="UniProtKB-SubCell"/>
</dbReference>
<dbReference type="GO" id="GO:0035792">
    <property type="term" value="C:host cell postsynaptic membrane"/>
    <property type="evidence" value="ECO:0007669"/>
    <property type="project" value="UniProtKB-KW"/>
</dbReference>
<dbReference type="GO" id="GO:0030550">
    <property type="term" value="F:acetylcholine receptor inhibitor activity"/>
    <property type="evidence" value="ECO:0007669"/>
    <property type="project" value="UniProtKB-KW"/>
</dbReference>
<dbReference type="GO" id="GO:0099106">
    <property type="term" value="F:ion channel regulator activity"/>
    <property type="evidence" value="ECO:0007669"/>
    <property type="project" value="UniProtKB-KW"/>
</dbReference>
<dbReference type="GO" id="GO:0090729">
    <property type="term" value="F:toxin activity"/>
    <property type="evidence" value="ECO:0007669"/>
    <property type="project" value="UniProtKB-KW"/>
</dbReference>
<dbReference type="InterPro" id="IPR009958">
    <property type="entry name" value="Conotoxin_a-typ"/>
</dbReference>
<dbReference type="InterPro" id="IPR018072">
    <property type="entry name" value="Conotoxin_a-typ_CS"/>
</dbReference>
<dbReference type="Pfam" id="PF07365">
    <property type="entry name" value="Toxin_8"/>
    <property type="match status" value="1"/>
</dbReference>
<dbReference type="PROSITE" id="PS60014">
    <property type="entry name" value="ALPHA_CONOTOXIN"/>
    <property type="match status" value="1"/>
</dbReference>
<organism>
    <name type="scientific">Conus inscriptus</name>
    <name type="common">Engraved cone</name>
    <dbReference type="NCBI Taxonomy" id="257329"/>
    <lineage>
        <taxon>Eukaryota</taxon>
        <taxon>Metazoa</taxon>
        <taxon>Spiralia</taxon>
        <taxon>Lophotrochozoa</taxon>
        <taxon>Mollusca</taxon>
        <taxon>Gastropoda</taxon>
        <taxon>Caenogastropoda</taxon>
        <taxon>Neogastropoda</taxon>
        <taxon>Conoidea</taxon>
        <taxon>Conidae</taxon>
        <taxon>Conus</taxon>
        <taxon>Phasmoconus</taxon>
    </lineage>
</organism>
<comment type="function">
    <text evidence="2">Alpha-conotoxins act on postsynaptic membranes, they bind to the nicotinic acetylcholine receptors (nAChR) and thus inhibit them.</text>
</comment>
<comment type="subcellular location">
    <subcellularLocation>
        <location evidence="3">Secreted</location>
    </subcellularLocation>
</comment>
<comment type="tissue specificity">
    <text evidence="6">Expressed by the venom duct.</text>
</comment>
<comment type="domain">
    <text evidence="5">The cysteine framework is I (CC-C-C). Alpha4/7 pattern.</text>
</comment>
<comment type="mass spectrometry"/>
<comment type="similarity">
    <text evidence="5">Belongs to the conotoxin A superfamily.</text>
</comment>
<feature type="peptide" id="PRO_0000453223" description="Alpha-conotoxin In1878" evidence="3">
    <location>
        <begin position="1"/>
        <end position="17"/>
    </location>
</feature>
<feature type="region of interest" description="Ser-Xaa-Pro motif, crucial for potent interaction with nAChR" evidence="1">
    <location>
        <begin position="5"/>
        <end position="7"/>
    </location>
</feature>
<feature type="modified residue" description="4-hydroxyproline" evidence="3">
    <location>
        <position position="8"/>
    </location>
</feature>
<feature type="modified residue" description="Cysteine amide" evidence="3">
    <location>
        <position position="17"/>
    </location>
</feature>
<feature type="disulfide bond" evidence="2">
    <location>
        <begin position="3"/>
        <end position="9"/>
    </location>
</feature>
<feature type="disulfide bond" evidence="2">
    <location>
        <begin position="4"/>
        <end position="17"/>
    </location>
</feature>
<accession>P0DUR1</accession>
<proteinExistence type="evidence at protein level"/>
<keyword id="KW-0008">Acetylcholine receptor inhibiting toxin</keyword>
<keyword id="KW-0027">Amidation</keyword>
<keyword id="KW-0903">Direct protein sequencing</keyword>
<keyword id="KW-1015">Disulfide bond</keyword>
<keyword id="KW-0379">Hydroxylation</keyword>
<keyword id="KW-0872">Ion channel impairing toxin</keyword>
<keyword id="KW-0528">Neurotoxin</keyword>
<keyword id="KW-0629">Postsynaptic neurotoxin</keyword>
<keyword id="KW-0964">Secreted</keyword>
<keyword id="KW-0800">Toxin</keyword>
<evidence type="ECO:0000250" key="1">
    <source>
        <dbReference type="UniProtKB" id="P56636"/>
    </source>
</evidence>
<evidence type="ECO:0000250" key="2">
    <source>
        <dbReference type="UniProtKB" id="X1WB75"/>
    </source>
</evidence>
<evidence type="ECO:0000269" key="3">
    <source>
    </source>
</evidence>
<evidence type="ECO:0000303" key="4">
    <source>
    </source>
</evidence>
<evidence type="ECO:0000305" key="5"/>
<evidence type="ECO:0000305" key="6">
    <source>
    </source>
</evidence>
<reference key="1">
    <citation type="journal article" date="2021" name="Saudi J. Biol. Sci.">
        <title>Mass spectrometric identification and denovo sequencing of novel conotoxins from vermivorous cone snail (Conus inscriptus), and preliminary screening of its venom for biological activities in vitro and in vivo.</title>
        <authorList>
            <person name="Jain R.P."/>
            <person name="Jayaseelan B.F."/>
            <person name="Wilson Alphonse C.R."/>
            <person name="Mahmoud A.H."/>
            <person name="Mohammed O.B."/>
            <person name="Ahmed Almunqedhi B.M."/>
            <person name="Rajaian Pushpabai R."/>
        </authorList>
    </citation>
    <scope>PROTEIN SEQUENCE</scope>
    <scope>SUBCELLULAR LOCATION</scope>
    <scope>MASS SPECTROMETRY</scope>
    <scope>HYDROXYLATION AT PRO-8</scope>
    <scope>AMIDATION AT CYS-17</scope>
    <source>
        <tissue>Venom</tissue>
    </source>
</reference>
<protein>
    <recommendedName>
        <fullName evidence="4">Alpha-conotoxin In1878</fullName>
    </recommendedName>
</protein>
<name>CA878_CONIN</name>
<sequence>EGCCSNPPCRHTHPEVC</sequence>